<accession>D3ZAQ5</accession>
<keyword id="KW-1185">Reference proteome</keyword>
<evidence type="ECO:0000256" key="1">
    <source>
        <dbReference type="SAM" id="MobiDB-lite"/>
    </source>
</evidence>
<dbReference type="EMBL" id="CH473972">
    <property type="protein sequence ID" value="EDL92399.1"/>
    <property type="molecule type" value="Genomic_DNA"/>
</dbReference>
<dbReference type="RefSeq" id="NP_001102599.1">
    <property type="nucleotide sequence ID" value="NM_001109129.1"/>
</dbReference>
<dbReference type="FunCoup" id="D3ZAQ5">
    <property type="interactions" value="41"/>
</dbReference>
<dbReference type="STRING" id="10116.ENSRNOP00000024125"/>
<dbReference type="GlyGen" id="D3ZAQ5">
    <property type="glycosylation" value="1 site"/>
</dbReference>
<dbReference type="iPTMnet" id="D3ZAQ5"/>
<dbReference type="PhosphoSitePlus" id="D3ZAQ5"/>
<dbReference type="PaxDb" id="10116-ENSRNOP00000024125"/>
<dbReference type="GeneID" id="498943"/>
<dbReference type="KEGG" id="rno:498943"/>
<dbReference type="UCSC" id="RGD:1561415">
    <property type="organism name" value="rat"/>
</dbReference>
<dbReference type="AGR" id="RGD:1561415"/>
<dbReference type="CTD" id="498943"/>
<dbReference type="RGD" id="1561415">
    <property type="gene designation" value="C19h16orf86"/>
</dbReference>
<dbReference type="eggNOG" id="ENOG502SVW5">
    <property type="taxonomic scope" value="Eukaryota"/>
</dbReference>
<dbReference type="HOGENOM" id="CLU_943194_0_0_1"/>
<dbReference type="InParanoid" id="D3ZAQ5"/>
<dbReference type="PhylomeDB" id="D3ZAQ5"/>
<dbReference type="TreeFam" id="TF337136"/>
<dbReference type="PRO" id="PR:D3ZAQ5"/>
<dbReference type="Proteomes" id="UP000002494">
    <property type="component" value="Unplaced"/>
</dbReference>
<dbReference type="Proteomes" id="UP000234681">
    <property type="component" value="Chromosome 19"/>
</dbReference>
<dbReference type="InterPro" id="IPR031516">
    <property type="entry name" value="DUF4691"/>
</dbReference>
<dbReference type="PANTHER" id="PTHR37867">
    <property type="entry name" value="CHROMOSOME 16 OPEN READING FRAME 86"/>
    <property type="match status" value="1"/>
</dbReference>
<dbReference type="PANTHER" id="PTHR37867:SF1">
    <property type="entry name" value="CHROMOSOME 16 OPEN READING FRAME 86"/>
    <property type="match status" value="1"/>
</dbReference>
<dbReference type="Pfam" id="PF15762">
    <property type="entry name" value="DUF4691"/>
    <property type="match status" value="1"/>
</dbReference>
<reference key="1">
    <citation type="submission" date="2005-07" db="EMBL/GenBank/DDBJ databases">
        <authorList>
            <person name="Mural R.J."/>
            <person name="Adams M.D."/>
            <person name="Myers E.W."/>
            <person name="Smith H.O."/>
            <person name="Venter J.C."/>
        </authorList>
    </citation>
    <scope>NUCLEOTIDE SEQUENCE [LARGE SCALE GENOMIC DNA]</scope>
</reference>
<organism>
    <name type="scientific">Rattus norvegicus</name>
    <name type="common">Rat</name>
    <dbReference type="NCBI Taxonomy" id="10116"/>
    <lineage>
        <taxon>Eukaryota</taxon>
        <taxon>Metazoa</taxon>
        <taxon>Chordata</taxon>
        <taxon>Craniata</taxon>
        <taxon>Vertebrata</taxon>
        <taxon>Euteleostomi</taxon>
        <taxon>Mammalia</taxon>
        <taxon>Eutheria</taxon>
        <taxon>Euarchontoglires</taxon>
        <taxon>Glires</taxon>
        <taxon>Rodentia</taxon>
        <taxon>Myomorpha</taxon>
        <taxon>Muroidea</taxon>
        <taxon>Muridae</taxon>
        <taxon>Murinae</taxon>
        <taxon>Rattus</taxon>
    </lineage>
</organism>
<sequence length="306" mass="32097">MASAGAKRQPEAQNGAAVGLAQVAEIPECPGTEECLVPAHETCSTPGEDRCPVGHSLEPELQEEGINLGEEGLNPGVEAGEERGPKPTSSIVRPAHGPKRKAEAELPPGLLLQKEEPEGSHSESSLSSKQHKKAKKRKSVGAPVPPAVASASAPTETLGLEPFAVPWVLAGKAQRLRPLYQYINYCNPELNQAGDGDREPEAEPESELALAPEEAGVEQLQLQTLLPMAGELGLGLALPCPNPLAPLTHNLPPLVEEVGEEPGGLSSLRVSGSLKAEVDKTTQVDIDKMLSVCAAPLVPPLSPQYK</sequence>
<feature type="chain" id="PRO_0000402136" description="Uncharacterized protein C16orf86 homolog">
    <location>
        <begin position="1"/>
        <end position="306"/>
    </location>
</feature>
<feature type="region of interest" description="Disordered" evidence="1">
    <location>
        <begin position="40"/>
        <end position="156"/>
    </location>
</feature>
<feature type="compositionally biased region" description="Low complexity" evidence="1">
    <location>
        <begin position="64"/>
        <end position="73"/>
    </location>
</feature>
<feature type="compositionally biased region" description="Basic residues" evidence="1">
    <location>
        <begin position="129"/>
        <end position="139"/>
    </location>
</feature>
<name>CP086_RAT</name>
<proteinExistence type="predicted"/>
<protein>
    <recommendedName>
        <fullName>Uncharacterized protein C16orf86 homolog</fullName>
    </recommendedName>
</protein>